<feature type="chain" id="PRO_0000359008" description="Acetyl-coenzyme A carboxylase carboxyl transferase subunit beta">
    <location>
        <begin position="1"/>
        <end position="287"/>
    </location>
</feature>
<feature type="domain" description="CoA carboxyltransferase N-terminal" evidence="2">
    <location>
        <begin position="28"/>
        <end position="287"/>
    </location>
</feature>
<feature type="zinc finger region" description="C4-type" evidence="1">
    <location>
        <begin position="32"/>
        <end position="54"/>
    </location>
</feature>
<feature type="binding site" evidence="1">
    <location>
        <position position="32"/>
    </location>
    <ligand>
        <name>Zn(2+)</name>
        <dbReference type="ChEBI" id="CHEBI:29105"/>
    </ligand>
</feature>
<feature type="binding site" evidence="1">
    <location>
        <position position="35"/>
    </location>
    <ligand>
        <name>Zn(2+)</name>
        <dbReference type="ChEBI" id="CHEBI:29105"/>
    </ligand>
</feature>
<feature type="binding site" evidence="1">
    <location>
        <position position="51"/>
    </location>
    <ligand>
        <name>Zn(2+)</name>
        <dbReference type="ChEBI" id="CHEBI:29105"/>
    </ligand>
</feature>
<feature type="binding site" evidence="1">
    <location>
        <position position="54"/>
    </location>
    <ligand>
        <name>Zn(2+)</name>
        <dbReference type="ChEBI" id="CHEBI:29105"/>
    </ligand>
</feature>
<keyword id="KW-0067">ATP-binding</keyword>
<keyword id="KW-0963">Cytoplasm</keyword>
<keyword id="KW-0275">Fatty acid biosynthesis</keyword>
<keyword id="KW-0276">Fatty acid metabolism</keyword>
<keyword id="KW-0444">Lipid biosynthesis</keyword>
<keyword id="KW-0443">Lipid metabolism</keyword>
<keyword id="KW-0479">Metal-binding</keyword>
<keyword id="KW-0547">Nucleotide-binding</keyword>
<keyword id="KW-0808">Transferase</keyword>
<keyword id="KW-0862">Zinc</keyword>
<keyword id="KW-0863">Zinc-finger</keyword>
<protein>
    <recommendedName>
        <fullName evidence="1">Acetyl-coenzyme A carboxylase carboxyl transferase subunit beta</fullName>
        <shortName evidence="1">ACCase subunit beta</shortName>
        <shortName evidence="1">Acetyl-CoA carboxylase carboxyltransferase subunit beta</shortName>
        <ecNumber evidence="1">2.1.3.15</ecNumber>
    </recommendedName>
</protein>
<dbReference type="EC" id="2.1.3.15" evidence="1"/>
<dbReference type="EMBL" id="CP000749">
    <property type="protein sequence ID" value="ABR70966.1"/>
    <property type="molecule type" value="Genomic_DNA"/>
</dbReference>
<dbReference type="SMR" id="A6VWY7"/>
<dbReference type="STRING" id="400668.Mmwyl1_2044"/>
<dbReference type="KEGG" id="mmw:Mmwyl1_2044"/>
<dbReference type="eggNOG" id="COG0777">
    <property type="taxonomic scope" value="Bacteria"/>
</dbReference>
<dbReference type="HOGENOM" id="CLU_015486_1_0_6"/>
<dbReference type="OrthoDB" id="9772975at2"/>
<dbReference type="UniPathway" id="UPA00655">
    <property type="reaction ID" value="UER00711"/>
</dbReference>
<dbReference type="GO" id="GO:0009329">
    <property type="term" value="C:acetate CoA-transferase complex"/>
    <property type="evidence" value="ECO:0007669"/>
    <property type="project" value="TreeGrafter"/>
</dbReference>
<dbReference type="GO" id="GO:0003989">
    <property type="term" value="F:acetyl-CoA carboxylase activity"/>
    <property type="evidence" value="ECO:0007669"/>
    <property type="project" value="InterPro"/>
</dbReference>
<dbReference type="GO" id="GO:0005524">
    <property type="term" value="F:ATP binding"/>
    <property type="evidence" value="ECO:0007669"/>
    <property type="project" value="UniProtKB-KW"/>
</dbReference>
<dbReference type="GO" id="GO:0016743">
    <property type="term" value="F:carboxyl- or carbamoyltransferase activity"/>
    <property type="evidence" value="ECO:0007669"/>
    <property type="project" value="UniProtKB-UniRule"/>
</dbReference>
<dbReference type="GO" id="GO:0008270">
    <property type="term" value="F:zinc ion binding"/>
    <property type="evidence" value="ECO:0007669"/>
    <property type="project" value="UniProtKB-UniRule"/>
</dbReference>
<dbReference type="GO" id="GO:0006633">
    <property type="term" value="P:fatty acid biosynthetic process"/>
    <property type="evidence" value="ECO:0007669"/>
    <property type="project" value="UniProtKB-KW"/>
</dbReference>
<dbReference type="GO" id="GO:2001295">
    <property type="term" value="P:malonyl-CoA biosynthetic process"/>
    <property type="evidence" value="ECO:0007669"/>
    <property type="project" value="UniProtKB-UniRule"/>
</dbReference>
<dbReference type="Gene3D" id="3.90.226.10">
    <property type="entry name" value="2-enoyl-CoA Hydratase, Chain A, domain 1"/>
    <property type="match status" value="1"/>
</dbReference>
<dbReference type="HAMAP" id="MF_01395">
    <property type="entry name" value="AcetylCoA_CT_beta"/>
    <property type="match status" value="1"/>
</dbReference>
<dbReference type="InterPro" id="IPR034733">
    <property type="entry name" value="AcCoA_carboxyl_beta"/>
</dbReference>
<dbReference type="InterPro" id="IPR000438">
    <property type="entry name" value="Acetyl_CoA_COase_Trfase_b_su"/>
</dbReference>
<dbReference type="InterPro" id="IPR029045">
    <property type="entry name" value="ClpP/crotonase-like_dom_sf"/>
</dbReference>
<dbReference type="InterPro" id="IPR011762">
    <property type="entry name" value="COA_CT_N"/>
</dbReference>
<dbReference type="InterPro" id="IPR041010">
    <property type="entry name" value="Znf-ACC"/>
</dbReference>
<dbReference type="NCBIfam" id="TIGR00515">
    <property type="entry name" value="accD"/>
    <property type="match status" value="1"/>
</dbReference>
<dbReference type="PANTHER" id="PTHR42995">
    <property type="entry name" value="ACETYL-COENZYME A CARBOXYLASE CARBOXYL TRANSFERASE SUBUNIT BETA, CHLOROPLASTIC"/>
    <property type="match status" value="1"/>
</dbReference>
<dbReference type="PANTHER" id="PTHR42995:SF5">
    <property type="entry name" value="ACETYL-COENZYME A CARBOXYLASE CARBOXYL TRANSFERASE SUBUNIT BETA, CHLOROPLASTIC"/>
    <property type="match status" value="1"/>
</dbReference>
<dbReference type="Pfam" id="PF01039">
    <property type="entry name" value="Carboxyl_trans"/>
    <property type="match status" value="1"/>
</dbReference>
<dbReference type="Pfam" id="PF17848">
    <property type="entry name" value="Zn_ribbon_ACC"/>
    <property type="match status" value="1"/>
</dbReference>
<dbReference type="PRINTS" id="PR01070">
    <property type="entry name" value="ACCCTRFRASEB"/>
</dbReference>
<dbReference type="SUPFAM" id="SSF52096">
    <property type="entry name" value="ClpP/crotonase"/>
    <property type="match status" value="1"/>
</dbReference>
<dbReference type="PROSITE" id="PS50980">
    <property type="entry name" value="COA_CT_NTER"/>
    <property type="match status" value="1"/>
</dbReference>
<comment type="function">
    <text evidence="1">Component of the acetyl coenzyme A carboxylase (ACC) complex. Biotin carboxylase (BC) catalyzes the carboxylation of biotin on its carrier protein (BCCP) and then the CO(2) group is transferred by the transcarboxylase to acetyl-CoA to form malonyl-CoA.</text>
</comment>
<comment type="catalytic activity">
    <reaction evidence="1">
        <text>N(6)-carboxybiotinyl-L-lysyl-[protein] + acetyl-CoA = N(6)-biotinyl-L-lysyl-[protein] + malonyl-CoA</text>
        <dbReference type="Rhea" id="RHEA:54728"/>
        <dbReference type="Rhea" id="RHEA-COMP:10505"/>
        <dbReference type="Rhea" id="RHEA-COMP:10506"/>
        <dbReference type="ChEBI" id="CHEBI:57288"/>
        <dbReference type="ChEBI" id="CHEBI:57384"/>
        <dbReference type="ChEBI" id="CHEBI:83144"/>
        <dbReference type="ChEBI" id="CHEBI:83145"/>
        <dbReference type="EC" id="2.1.3.15"/>
    </reaction>
</comment>
<comment type="cofactor">
    <cofactor evidence="1">
        <name>Zn(2+)</name>
        <dbReference type="ChEBI" id="CHEBI:29105"/>
    </cofactor>
    <text evidence="1">Binds 1 zinc ion per subunit.</text>
</comment>
<comment type="pathway">
    <text evidence="1">Lipid metabolism; malonyl-CoA biosynthesis; malonyl-CoA from acetyl-CoA: step 1/1.</text>
</comment>
<comment type="subunit">
    <text evidence="1">Acetyl-CoA carboxylase is a heterohexamer composed of biotin carboxyl carrier protein (AccB), biotin carboxylase (AccC) and two subunits each of ACCase subunit alpha (AccA) and ACCase subunit beta (AccD).</text>
</comment>
<comment type="subcellular location">
    <subcellularLocation>
        <location evidence="1">Cytoplasm</location>
    </subcellularLocation>
</comment>
<comment type="similarity">
    <text evidence="1">Belongs to the AccD/PCCB family.</text>
</comment>
<accession>A6VWY7</accession>
<name>ACCD_MARMS</name>
<gene>
    <name evidence="1" type="primary">accD</name>
    <name type="ordered locus">Mmwyl1_2044</name>
</gene>
<sequence>MSSWLDKFVPSIVRSESKRSAGSVPEGLWKKCPKCENVLYRPELEKNLDVCPKCSHHLRVSARRRLDIFLDKEGRHEIAAHLEPEDKLKFKDSKRYKDRLADAQKATGEKDALVAMQGALNGMPVVAVAFEFSFLGGSMGAIVGERFIQAVNVCLEKRIPLVCFSASGGARMQEALISLMQMAKTSAGLERLKQEGIPYISVMTDPVFGGVSASLAMLGDLNVAEPNALIGFAGPRVIEQTVREKLPEGFQRSEFLLEKGALDMIIKRDEMRNRLYNILSLLTNKVA</sequence>
<proteinExistence type="inferred from homology"/>
<reference key="1">
    <citation type="submission" date="2007-06" db="EMBL/GenBank/DDBJ databases">
        <title>Complete sequence of Marinomonas sp. MWYL1.</title>
        <authorList>
            <consortium name="US DOE Joint Genome Institute"/>
            <person name="Copeland A."/>
            <person name="Lucas S."/>
            <person name="Lapidus A."/>
            <person name="Barry K."/>
            <person name="Glavina del Rio T."/>
            <person name="Dalin E."/>
            <person name="Tice H."/>
            <person name="Pitluck S."/>
            <person name="Kiss H."/>
            <person name="Brettin T."/>
            <person name="Bruce D."/>
            <person name="Detter J.C."/>
            <person name="Han C."/>
            <person name="Schmutz J."/>
            <person name="Larimer F."/>
            <person name="Land M."/>
            <person name="Hauser L."/>
            <person name="Kyrpides N."/>
            <person name="Kim E."/>
            <person name="Johnston A.W.B."/>
            <person name="Todd J.D."/>
            <person name="Rogers R."/>
            <person name="Wexler M."/>
            <person name="Bond P.L."/>
            <person name="Li Y."/>
            <person name="Richardson P."/>
        </authorList>
    </citation>
    <scope>NUCLEOTIDE SEQUENCE [LARGE SCALE GENOMIC DNA]</scope>
    <source>
        <strain>MWYL1</strain>
    </source>
</reference>
<evidence type="ECO:0000255" key="1">
    <source>
        <dbReference type="HAMAP-Rule" id="MF_01395"/>
    </source>
</evidence>
<evidence type="ECO:0000255" key="2">
    <source>
        <dbReference type="PROSITE-ProRule" id="PRU01136"/>
    </source>
</evidence>
<organism>
    <name type="scientific">Marinomonas sp. (strain MWYL1)</name>
    <dbReference type="NCBI Taxonomy" id="400668"/>
    <lineage>
        <taxon>Bacteria</taxon>
        <taxon>Pseudomonadati</taxon>
        <taxon>Pseudomonadota</taxon>
        <taxon>Gammaproteobacteria</taxon>
        <taxon>Oceanospirillales</taxon>
        <taxon>Oceanospirillaceae</taxon>
        <taxon>Marinomonas</taxon>
    </lineage>
</organism>